<name>FZD7_HUMAN</name>
<feature type="signal peptide" evidence="3">
    <location>
        <begin position="1"/>
        <end position="32"/>
    </location>
</feature>
<feature type="chain" id="PRO_0000012996" description="Frizzled-7">
    <location>
        <begin position="33"/>
        <end position="574"/>
    </location>
</feature>
<feature type="topological domain" description="Extracellular" evidence="3">
    <location>
        <begin position="33"/>
        <end position="256"/>
    </location>
</feature>
<feature type="transmembrane region" description="Helical; Name=1" evidence="3">
    <location>
        <begin position="257"/>
        <end position="277"/>
    </location>
</feature>
<feature type="topological domain" description="Cytoplasmic" evidence="3">
    <location>
        <begin position="278"/>
        <end position="288"/>
    </location>
</feature>
<feature type="transmembrane region" description="Helical; Name=2" evidence="3">
    <location>
        <begin position="289"/>
        <end position="309"/>
    </location>
</feature>
<feature type="topological domain" description="Extracellular" evidence="3">
    <location>
        <begin position="310"/>
        <end position="336"/>
    </location>
</feature>
<feature type="transmembrane region" description="Helical; Name=3" evidence="3">
    <location>
        <begin position="337"/>
        <end position="357"/>
    </location>
</feature>
<feature type="topological domain" description="Cytoplasmic" evidence="3">
    <location>
        <begin position="358"/>
        <end position="379"/>
    </location>
</feature>
<feature type="transmembrane region" description="Helical; Name=4" evidence="3">
    <location>
        <begin position="380"/>
        <end position="400"/>
    </location>
</feature>
<feature type="topological domain" description="Extracellular" evidence="3">
    <location>
        <begin position="401"/>
        <end position="423"/>
    </location>
</feature>
<feature type="transmembrane region" description="Helical; Name=5" evidence="3">
    <location>
        <begin position="424"/>
        <end position="444"/>
    </location>
</feature>
<feature type="topological domain" description="Cytoplasmic" evidence="3">
    <location>
        <begin position="445"/>
        <end position="470"/>
    </location>
</feature>
<feature type="transmembrane region" description="Helical; Name=6" evidence="3">
    <location>
        <begin position="471"/>
        <end position="491"/>
    </location>
</feature>
<feature type="topological domain" description="Extracellular" evidence="3">
    <location>
        <begin position="492"/>
        <end position="528"/>
    </location>
</feature>
<feature type="transmembrane region" description="Helical; Name=7" evidence="3">
    <location>
        <begin position="529"/>
        <end position="549"/>
    </location>
</feature>
<feature type="topological domain" description="Cytoplasmic" evidence="3">
    <location>
        <begin position="550"/>
        <end position="574"/>
    </location>
</feature>
<feature type="domain" description="FZ" evidence="4">
    <location>
        <begin position="44"/>
        <end position="163"/>
    </location>
</feature>
<feature type="short sequence motif" description="Lys-Thr-X-X-X-Trp motif, mediates interaction with the PDZ domain of Dvl family members" evidence="1">
    <location>
        <begin position="552"/>
        <end position="557"/>
    </location>
</feature>
<feature type="short sequence motif" description="PDZ-binding">
    <location>
        <begin position="572"/>
        <end position="574"/>
    </location>
</feature>
<feature type="site" description="Essential for SDCBP-mediated plasma membrane phosphatidylinositol-4,5-bisphosphate recognition" evidence="9">
    <location>
        <position position="569"/>
    </location>
</feature>
<feature type="glycosylation site" description="N-linked (GlcNAc...) asparagine" evidence="3">
    <location>
        <position position="63"/>
    </location>
</feature>
<feature type="glycosylation site" description="N-linked (GlcNAc...) asparagine" evidence="3">
    <location>
        <position position="164"/>
    </location>
</feature>
<feature type="disulfide bond" evidence="4">
    <location>
        <begin position="49"/>
        <end position="110"/>
    </location>
</feature>
<feature type="disulfide bond" evidence="4">
    <location>
        <begin position="57"/>
        <end position="103"/>
    </location>
</feature>
<feature type="disulfide bond" evidence="4">
    <location>
        <begin position="94"/>
        <end position="131"/>
    </location>
</feature>
<feature type="disulfide bond" evidence="4">
    <location>
        <begin position="120"/>
        <end position="160"/>
    </location>
</feature>
<feature type="disulfide bond" evidence="4">
    <location>
        <begin position="124"/>
        <end position="148"/>
    </location>
</feature>
<feature type="sequence variant" id="VAR_049292" description="In dbSNP:rs35111363.">
    <original>G</original>
    <variation>D</variation>
    <location>
        <position position="24"/>
    </location>
</feature>
<feature type="sequence variant" id="VAR_033024" description="In dbSNP:rs755615030." evidence="5">
    <original>G</original>
    <variation>S</variation>
    <location>
        <position position="24"/>
    </location>
</feature>
<feature type="sequence variant" id="VAR_033941" description="In dbSNP:rs34908164.">
    <original>G</original>
    <variation>E</variation>
    <location>
        <position position="196"/>
    </location>
</feature>
<feature type="sequence variant" id="VAR_033942" description="In dbSNP:rs35600847.">
    <original>A</original>
    <variation>V</variation>
    <location>
        <position position="487"/>
    </location>
</feature>
<feature type="mutagenesis site" description="Impaired SDCBP-mediated interaction with phosphatidylinositol-4,5-bisphosphate." evidence="9">
    <original>K</original>
    <variation>A</variation>
    <location>
        <position position="569"/>
    </location>
</feature>
<feature type="sequence conflict" description="In Ref. 1; BAA32424." evidence="11" ref="1">
    <original>A</original>
    <variation>V</variation>
    <location>
        <position position="8"/>
    </location>
</feature>
<feature type="sequence conflict" description="In Ref. 1; BAA32424." evidence="11" ref="1">
    <original>L</original>
    <variation>F</variation>
    <location>
        <position position="15"/>
    </location>
</feature>
<feature type="sequence conflict" description="In Ref. 1; BAA32424." evidence="11" ref="1">
    <original>R</original>
    <variation>K</variation>
    <location>
        <position position="201"/>
    </location>
</feature>
<feature type="sequence conflict" description="In Ref. 1; BAA32424." evidence="11" ref="1">
    <original>L</original>
    <variation>F</variation>
    <location>
        <position position="308"/>
    </location>
</feature>
<feature type="sequence conflict" description="In Ref. 1; BAA32424." evidence="11" ref="1">
    <original>S</original>
    <variation>N</variation>
    <location>
        <position position="408"/>
    </location>
</feature>
<feature type="sequence conflict" description="In Ref. 1; BAA32424." evidence="11" ref="1">
    <original>L</original>
    <variation>F</variation>
    <location>
        <position position="415"/>
    </location>
</feature>
<feature type="sequence conflict" description="In Ref. 1; BAA32424." evidence="11" ref="1">
    <original>L</original>
    <variation>F</variation>
    <location>
        <position position="433"/>
    </location>
</feature>
<feature type="sequence conflict" description="In Ref. 1; BAA32424." evidence="11" ref="1">
    <original>L</original>
    <variation>F</variation>
    <location>
        <position position="447"/>
    </location>
</feature>
<feature type="sequence conflict" description="In Ref. 1; BAA32424." evidence="11" ref="1">
    <original>Y</original>
    <variation>C</variation>
    <location>
        <position position="534"/>
    </location>
</feature>
<feature type="strand" evidence="15">
    <location>
        <begin position="45"/>
        <end position="47"/>
    </location>
</feature>
<feature type="strand" evidence="14">
    <location>
        <begin position="48"/>
        <end position="51"/>
    </location>
</feature>
<feature type="helix" evidence="14">
    <location>
        <begin position="55"/>
        <end position="57"/>
    </location>
</feature>
<feature type="strand" evidence="13">
    <location>
        <begin position="58"/>
        <end position="61"/>
    </location>
</feature>
<feature type="strand" evidence="14">
    <location>
        <begin position="64"/>
        <end position="68"/>
    </location>
</feature>
<feature type="turn" evidence="16">
    <location>
        <begin position="69"/>
        <end position="72"/>
    </location>
</feature>
<feature type="helix" evidence="14">
    <location>
        <begin position="76"/>
        <end position="84"/>
    </location>
</feature>
<feature type="helix" evidence="14">
    <location>
        <begin position="87"/>
        <end position="91"/>
    </location>
</feature>
<feature type="helix" evidence="14">
    <location>
        <begin position="98"/>
        <end position="106"/>
    </location>
</feature>
<feature type="strand" evidence="14">
    <location>
        <begin position="112"/>
        <end position="115"/>
    </location>
</feature>
<feature type="helix" evidence="14">
    <location>
        <begin position="121"/>
        <end position="128"/>
    </location>
</feature>
<feature type="helix" evidence="14">
    <location>
        <begin position="131"/>
        <end position="137"/>
    </location>
</feature>
<feature type="helix" evidence="14">
    <location>
        <begin position="144"/>
        <end position="146"/>
    </location>
</feature>
<feature type="helix" evidence="14">
    <location>
        <begin position="148"/>
        <end position="150"/>
    </location>
</feature>
<feature type="turn" evidence="14">
    <location>
        <begin position="154"/>
        <end position="156"/>
    </location>
</feature>
<feature type="helix" evidence="17">
    <location>
        <begin position="212"/>
        <end position="214"/>
    </location>
</feature>
<feature type="helix" evidence="17">
    <location>
        <begin position="218"/>
        <end position="220"/>
    </location>
</feature>
<feature type="strand" evidence="17">
    <location>
        <begin position="227"/>
        <end position="230"/>
    </location>
</feature>
<feature type="strand" evidence="17">
    <location>
        <begin position="241"/>
        <end position="244"/>
    </location>
</feature>
<feature type="helix" evidence="17">
    <location>
        <begin position="247"/>
        <end position="276"/>
    </location>
</feature>
<feature type="turn" evidence="18">
    <location>
        <begin position="279"/>
        <end position="281"/>
    </location>
</feature>
<feature type="turn" evidence="17">
    <location>
        <begin position="284"/>
        <end position="286"/>
    </location>
</feature>
<feature type="helix" evidence="17">
    <location>
        <begin position="287"/>
        <end position="309"/>
    </location>
</feature>
<feature type="strand" evidence="17">
    <location>
        <begin position="312"/>
        <end position="316"/>
    </location>
</feature>
<feature type="strand" evidence="17">
    <location>
        <begin position="319"/>
        <end position="323"/>
    </location>
</feature>
<feature type="strand" evidence="17">
    <location>
        <begin position="329"/>
        <end position="331"/>
    </location>
</feature>
<feature type="helix" evidence="17">
    <location>
        <begin position="334"/>
        <end position="365"/>
    </location>
</feature>
<feature type="helix" evidence="17">
    <location>
        <begin position="371"/>
        <end position="375"/>
    </location>
</feature>
<feature type="helix" evidence="17">
    <location>
        <begin position="378"/>
        <end position="398"/>
    </location>
</feature>
<feature type="strand" evidence="17">
    <location>
        <begin position="402"/>
        <end position="404"/>
    </location>
</feature>
<feature type="turn" evidence="17">
    <location>
        <begin position="406"/>
        <end position="408"/>
    </location>
</feature>
<feature type="strand" evidence="17">
    <location>
        <begin position="411"/>
        <end position="416"/>
    </location>
</feature>
<feature type="helix" evidence="17">
    <location>
        <begin position="418"/>
        <end position="424"/>
    </location>
</feature>
<feature type="helix" evidence="17">
    <location>
        <begin position="426"/>
        <end position="450"/>
    </location>
</feature>
<feature type="helix" evidence="17">
    <location>
        <begin position="466"/>
        <end position="507"/>
    </location>
</feature>
<feature type="turn" evidence="17">
    <location>
        <begin position="508"/>
        <end position="512"/>
    </location>
</feature>
<feature type="helix" evidence="17">
    <location>
        <begin position="527"/>
        <end position="542"/>
    </location>
</feature>
<feature type="helix" evidence="17">
    <location>
        <begin position="544"/>
        <end position="548"/>
    </location>
</feature>
<feature type="helix" evidence="17">
    <location>
        <begin position="551"/>
        <end position="562"/>
    </location>
</feature>
<feature type="strand" evidence="12">
    <location>
        <begin position="572"/>
        <end position="574"/>
    </location>
</feature>
<gene>
    <name type="primary">FZD7</name>
</gene>
<organism>
    <name type="scientific">Homo sapiens</name>
    <name type="common">Human</name>
    <dbReference type="NCBI Taxonomy" id="9606"/>
    <lineage>
        <taxon>Eukaryota</taxon>
        <taxon>Metazoa</taxon>
        <taxon>Chordata</taxon>
        <taxon>Craniata</taxon>
        <taxon>Vertebrata</taxon>
        <taxon>Euteleostomi</taxon>
        <taxon>Mammalia</taxon>
        <taxon>Eutheria</taxon>
        <taxon>Euarchontoglires</taxon>
        <taxon>Primates</taxon>
        <taxon>Haplorrhini</taxon>
        <taxon>Catarrhini</taxon>
        <taxon>Hominidae</taxon>
        <taxon>Homo</taxon>
    </lineage>
</organism>
<proteinExistence type="evidence at protein level"/>
<sequence length="574" mass="63620">MRDPGAAAPLSSLGLCALVLALLGALSAGAGAQPYHGEKGISVPDHGFCQPISIPLCTDIAYNQTILPNLLGHTNQEDAGLEVHQFYPLVKVQCSPELRFFLCSMYAPVCTVLDQAIPPCRSLCERARQGCEALMNKFGFQWPERLRCENFPVHGAGEICVGQNTSDGSGGPGGGPTAYPTAPYLPDLPFTALPPGASDGRGRPAFPFSCPRQLKVPPYLGYRFLGERDCGAPCEPGRANGLMYFKEEERRFARLWVGVWSVLCCASTLFTVLTYLVDMRRFSYPERPIIFLSGCYFMVAVAHVAGFLLEDRAVCVERFSDDGYRTVAQGTKKEGCTILFMVLYFFGMASSIWWVILSLTWFLAAGMKWGHEAIEANSQYFHLAAWAVPAVKTITILAMGQVDGDLLSGVCYVGLSSVDALRGFVLAPLFVYLFIGTSFLLAGFVSLFRIRTIMKHDGTKTEKLEKLMVRIGVFSVLYTVPATIVLACYFYEQAFREHWERTWLLQTCKSYAVPCPPGHFPPMSPDFTVFMIKYLMTMIVGITTGFWIWSGKTLQSWRRFYHRLSHSSKGETAV</sequence>
<comment type="function">
    <text evidence="2 8">Receptor for Wnt proteins. Most frizzled receptors are coupled to the beta-catenin canonical signaling pathway, which leads to the activation of disheveled proteins, inhibition of GSK-3 kinase, nuclear accumulation of beta-catenin and activation of Wnt target genes. A second signaling pathway involving PKC and calcium fluxes has been seen for some family members, but it is not yet clear if it represents a distinct pathway or if it can be integrated in the canonical pathway, as PKC seems to be required for Wnt-mediated inactivation of GSK-3 kinase. Both pathways seem to involve interactions with G-proteins. Activation by WNT8 induces expression of beta-catenin target genes (By similarity). Following ligand activation, binds to CCDC88C/DAPLE which displaces DVL1 from FZD7 and leads to inhibition of canonical Wnt signaling, activation of G-proteins by CCDC88C and triggering of non-canonical Wnt responses (PubMed:26126266). May be involved in transduction and intercellular transmission of polarity information during tissue morphogenesis and/or in differentiated tissues.</text>
</comment>
<comment type="function">
    <text evidence="10">(Microbial infection) Acts as a receptor for C.difficile toxin TcdB in the colonic epithelium.</text>
</comment>
<comment type="subunit">
    <text evidence="2 6 7 8">Interacts with MAGI3 (By similarity). Interacts with DVL1 (By similarity). Interacts with CCDC88C/DAPLE; the interaction displaces DVL1 from FZD7, leading to inhibition of canonical Wnt signaling and triggering of non-canonical Wnt responses (PubMed:26126266). Interacts with MYOC (PubMed:19188438). Binds to SDCBP; this interaction is increased by inositol trisphosphate (IP3) (PubMed:27386966). Interacts with glypican GPC3 (PubMed:24496449).</text>
</comment>
<comment type="subunit">
    <text evidence="10">(Microbial infection) Interacts with C.difficile toxin TcdB; frizzled receptors constitute the major host receptors for TcdB in the colonic epithelium.</text>
</comment>
<comment type="interaction">
    <interactant intactId="EBI-746917">
        <id>O75084</id>
    </interactant>
    <interactant intactId="EBI-17444777">
        <id>O43315</id>
        <label>AQP9</label>
    </interactant>
    <organismsDiffer>false</organismsDiffer>
    <experiments>3</experiments>
</comment>
<comment type="interaction">
    <interactant intactId="EBI-746917">
        <id>O75084</id>
    </interactant>
    <interactant intactId="EBI-747430">
        <id>Q9BXK5</id>
        <label>BCL2L13</label>
    </interactant>
    <organismsDiffer>false</organismsDiffer>
    <experiments>3</experiments>
</comment>
<comment type="interaction">
    <interactant intactId="EBI-746917">
        <id>O75084</id>
    </interactant>
    <interactant intactId="EBI-2833872">
        <id>O15552</id>
        <label>FFAR2</label>
    </interactant>
    <organismsDiffer>false</organismsDiffer>
    <experiments>3</experiments>
</comment>
<comment type="interaction">
    <interactant intactId="EBI-746917">
        <id>O75084</id>
    </interactant>
    <interactant intactId="EBI-749311">
        <id>P37235</id>
        <label>HPCAL1</label>
    </interactant>
    <organismsDiffer>false</organismsDiffer>
    <experiments>3</experiments>
</comment>
<comment type="interaction">
    <interactant intactId="EBI-746917">
        <id>O75084</id>
    </interactant>
    <interactant intactId="EBI-17490413">
        <id>A8MZ59</id>
        <label>LEUTX</label>
    </interactant>
    <organismsDiffer>false</organismsDiffer>
    <experiments>3</experiments>
</comment>
<comment type="interaction">
    <interactant intactId="EBI-746917">
        <id>O75084</id>
    </interactant>
    <interactant intactId="EBI-2691601">
        <id>P10620</id>
        <label>MGST1</label>
    </interactant>
    <organismsDiffer>false</organismsDiffer>
    <experiments>3</experiments>
</comment>
<comment type="interaction">
    <interactant intactId="EBI-746917">
        <id>O75084</id>
    </interactant>
    <interactant intactId="EBI-749635">
        <id>P61601</id>
        <label>NCALD</label>
    </interactant>
    <organismsDiffer>false</organismsDiffer>
    <experiments>3</experiments>
</comment>
<comment type="interaction">
    <interactant intactId="EBI-746917">
        <id>O75084</id>
    </interactant>
    <interactant intactId="EBI-746987">
        <id>P62166</id>
        <label>NCS1</label>
    </interactant>
    <organismsDiffer>false</organismsDiffer>
    <experiments>5</experiments>
</comment>
<comment type="interaction">
    <interactant intactId="EBI-746917">
        <id>O75084</id>
    </interactant>
    <interactant intactId="EBI-977302">
        <id>P04156</id>
        <label>PRNP</label>
    </interactant>
    <organismsDiffer>false</organismsDiffer>
    <experiments>3</experiments>
</comment>
<comment type="interaction">
    <interactant intactId="EBI-746917">
        <id>O75084</id>
    </interactant>
    <interactant intactId="EBI-727004">
        <id>O00560</id>
        <label>SDCBP</label>
    </interactant>
    <organismsDiffer>false</organismsDiffer>
    <experiments>4</experiments>
</comment>
<comment type="interaction">
    <interactant intactId="EBI-746917">
        <id>O75084</id>
    </interactant>
    <interactant intactId="EBI-347996">
        <id>O43765</id>
        <label>SGTA</label>
    </interactant>
    <organismsDiffer>false</organismsDiffer>
    <experiments>3</experiments>
</comment>
<comment type="interaction">
    <interactant intactId="EBI-746917">
        <id>O75084</id>
    </interactant>
    <interactant intactId="EBI-744081">
        <id>Q96EQ0</id>
        <label>SGTB</label>
    </interactant>
    <organismsDiffer>false</organismsDiffer>
    <experiments>3</experiments>
</comment>
<comment type="interaction">
    <interactant intactId="EBI-746917">
        <id>O75084</id>
    </interactant>
    <interactant intactId="EBI-13918058">
        <id>O14863</id>
        <label>SLC30A4</label>
    </interactant>
    <organismsDiffer>false</organismsDiffer>
    <experiments>3</experiments>
</comment>
<comment type="interaction">
    <interactant intactId="EBI-746917">
        <id>O75084</id>
    </interactant>
    <interactant intactId="EBI-12898013">
        <id>Q9NP94</id>
        <label>SLC39A2</label>
    </interactant>
    <organismsDiffer>false</organismsDiffer>
    <experiments>3</experiments>
</comment>
<comment type="interaction">
    <interactant intactId="EBI-746917">
        <id>O75084</id>
    </interactant>
    <interactant intactId="EBI-11343466">
        <id>Q9H2J7</id>
        <label>SLC6A15</label>
    </interactant>
    <organismsDiffer>false</organismsDiffer>
    <experiments>3</experiments>
</comment>
<comment type="interaction">
    <interactant intactId="EBI-746917">
        <id>O75084</id>
    </interactant>
    <interactant intactId="EBI-10982110">
        <id>Q96Q45-2</id>
        <label>TMEM237</label>
    </interactant>
    <organismsDiffer>false</organismsDiffer>
    <experiments>3</experiments>
</comment>
<comment type="interaction">
    <interactant intactId="EBI-746917">
        <id>O75084</id>
    </interactant>
    <interactant intactId="EBI-741480">
        <id>Q9UMX0</id>
        <label>UBQLN1</label>
    </interactant>
    <organismsDiffer>false</organismsDiffer>
    <experiments>5</experiments>
</comment>
<comment type="interaction">
    <interactant intactId="EBI-746917">
        <id>O75084</id>
    </interactant>
    <interactant intactId="EBI-947187">
        <id>Q9UHD9</id>
        <label>UBQLN2</label>
    </interactant>
    <organismsDiffer>false</organismsDiffer>
    <experiments>3</experiments>
</comment>
<comment type="interaction">
    <interactant intactId="EBI-746917">
        <id>O75084</id>
    </interactant>
    <interactant intactId="EBI-3644922">
        <id>P56703</id>
        <label>WNT3</label>
    </interactant>
    <organismsDiffer>false</organismsDiffer>
    <experiments>3</experiments>
</comment>
<comment type="subcellular location">
    <subcellularLocation>
        <location evidence="9">Cell membrane</location>
        <topology evidence="9">Multi-pass membrane protein</topology>
    </subcellularLocation>
    <subcellularLocation>
        <location evidence="9">Endosome membrane</location>
        <topology evidence="9">Multi-pass membrane protein</topology>
    </subcellularLocation>
    <text evidence="9">Associated to the plasma membrane in the presence of FZD7 and phosphatidylinositol 4,5-bisphosphate (PIP2). Localized in recycling endosomes in other conditions.</text>
</comment>
<comment type="tissue specificity">
    <text>High expression in adult skeletal muscle and fetal kidney, followed by fetal lung, adult heart, brain, and placenta. Specifically expressed in squamous cell esophageal carcinomas.</text>
</comment>
<comment type="domain">
    <text evidence="1">Lys-Thr-X-X-X-Trp motif interacts with the PDZ domain of Dvl (Disheveled) family members and is involved in the activation of the Wnt/beta-catenin signaling pathway.</text>
</comment>
<comment type="domain">
    <text evidence="1">The FZ domain is involved in binding with Wnt ligands.</text>
</comment>
<comment type="PTM">
    <text evidence="1">Ubiquitinated by ZNRF3, leading to its degradation by the proteasome.</text>
</comment>
<comment type="similarity">
    <text evidence="11">Belongs to the G-protein coupled receptor Fz/Smo family.</text>
</comment>
<reference key="1">
    <citation type="journal article" date="1998" name="Proc. Natl. Acad. Sci. U.S.A.">
        <title>A novel frizzled gene identified in human esophageal carcinoma mediates APC/beta-catenin signals.</title>
        <authorList>
            <person name="Tanaka S."/>
            <person name="Akiyoshi T."/>
            <person name="Mori M."/>
            <person name="Wands J.R."/>
            <person name="Sugimachi K."/>
        </authorList>
    </citation>
    <scope>NUCLEOTIDE SEQUENCE [MRNA]</scope>
    <scope>COUPLING TO BETA-CATENIN PATHWAY</scope>
    <source>
        <tissue>Esophageal carcinoma</tissue>
    </source>
</reference>
<reference key="2">
    <citation type="journal article" date="2005" name="Nature">
        <title>Generation and annotation of the DNA sequences of human chromosomes 2 and 4.</title>
        <authorList>
            <person name="Hillier L.W."/>
            <person name="Graves T.A."/>
            <person name="Fulton R.S."/>
            <person name="Fulton L.A."/>
            <person name="Pepin K.H."/>
            <person name="Minx P."/>
            <person name="Wagner-McPherson C."/>
            <person name="Layman D."/>
            <person name="Wylie K."/>
            <person name="Sekhon M."/>
            <person name="Becker M.C."/>
            <person name="Fewell G.A."/>
            <person name="Delehaunty K.D."/>
            <person name="Miner T.L."/>
            <person name="Nash W.E."/>
            <person name="Kremitzki C."/>
            <person name="Oddy L."/>
            <person name="Du H."/>
            <person name="Sun H."/>
            <person name="Bradshaw-Cordum H."/>
            <person name="Ali J."/>
            <person name="Carter J."/>
            <person name="Cordes M."/>
            <person name="Harris A."/>
            <person name="Isak A."/>
            <person name="van Brunt A."/>
            <person name="Nguyen C."/>
            <person name="Du F."/>
            <person name="Courtney L."/>
            <person name="Kalicki J."/>
            <person name="Ozersky P."/>
            <person name="Abbott S."/>
            <person name="Armstrong J."/>
            <person name="Belter E.A."/>
            <person name="Caruso L."/>
            <person name="Cedroni M."/>
            <person name="Cotton M."/>
            <person name="Davidson T."/>
            <person name="Desai A."/>
            <person name="Elliott G."/>
            <person name="Erb T."/>
            <person name="Fronick C."/>
            <person name="Gaige T."/>
            <person name="Haakenson W."/>
            <person name="Haglund K."/>
            <person name="Holmes A."/>
            <person name="Harkins R."/>
            <person name="Kim K."/>
            <person name="Kruchowski S.S."/>
            <person name="Strong C.M."/>
            <person name="Grewal N."/>
            <person name="Goyea E."/>
            <person name="Hou S."/>
            <person name="Levy A."/>
            <person name="Martinka S."/>
            <person name="Mead K."/>
            <person name="McLellan M.D."/>
            <person name="Meyer R."/>
            <person name="Randall-Maher J."/>
            <person name="Tomlinson C."/>
            <person name="Dauphin-Kohlberg S."/>
            <person name="Kozlowicz-Reilly A."/>
            <person name="Shah N."/>
            <person name="Swearengen-Shahid S."/>
            <person name="Snider J."/>
            <person name="Strong J.T."/>
            <person name="Thompson J."/>
            <person name="Yoakum M."/>
            <person name="Leonard S."/>
            <person name="Pearman C."/>
            <person name="Trani L."/>
            <person name="Radionenko M."/>
            <person name="Waligorski J.E."/>
            <person name="Wang C."/>
            <person name="Rock S.M."/>
            <person name="Tin-Wollam A.-M."/>
            <person name="Maupin R."/>
            <person name="Latreille P."/>
            <person name="Wendl M.C."/>
            <person name="Yang S.-P."/>
            <person name="Pohl C."/>
            <person name="Wallis J.W."/>
            <person name="Spieth J."/>
            <person name="Bieri T.A."/>
            <person name="Berkowicz N."/>
            <person name="Nelson J.O."/>
            <person name="Osborne J."/>
            <person name="Ding L."/>
            <person name="Meyer R."/>
            <person name="Sabo A."/>
            <person name="Shotland Y."/>
            <person name="Sinha P."/>
            <person name="Wohldmann P.E."/>
            <person name="Cook L.L."/>
            <person name="Hickenbotham M.T."/>
            <person name="Eldred J."/>
            <person name="Williams D."/>
            <person name="Jones T.A."/>
            <person name="She X."/>
            <person name="Ciccarelli F.D."/>
            <person name="Izaurralde E."/>
            <person name="Taylor J."/>
            <person name="Schmutz J."/>
            <person name="Myers R.M."/>
            <person name="Cox D.R."/>
            <person name="Huang X."/>
            <person name="McPherson J.D."/>
            <person name="Mardis E.R."/>
            <person name="Clifton S.W."/>
            <person name="Warren W.C."/>
            <person name="Chinwalla A.T."/>
            <person name="Eddy S.R."/>
            <person name="Marra M.A."/>
            <person name="Ovcharenko I."/>
            <person name="Furey T.S."/>
            <person name="Miller W."/>
            <person name="Eichler E.E."/>
            <person name="Bork P."/>
            <person name="Suyama M."/>
            <person name="Torrents D."/>
            <person name="Waterston R.H."/>
            <person name="Wilson R.K."/>
        </authorList>
    </citation>
    <scope>NUCLEOTIDE SEQUENCE [LARGE SCALE GENOMIC DNA]</scope>
</reference>
<reference key="3">
    <citation type="submission" date="2005-09" db="EMBL/GenBank/DDBJ databases">
        <authorList>
            <person name="Mural R.J."/>
            <person name="Istrail S."/>
            <person name="Sutton G.G."/>
            <person name="Florea L."/>
            <person name="Halpern A.L."/>
            <person name="Mobarry C.M."/>
            <person name="Lippert R."/>
            <person name="Walenz B."/>
            <person name="Shatkay H."/>
            <person name="Dew I."/>
            <person name="Miller J.R."/>
            <person name="Flanigan M.J."/>
            <person name="Edwards N.J."/>
            <person name="Bolanos R."/>
            <person name="Fasulo D."/>
            <person name="Halldorsson B.V."/>
            <person name="Hannenhalli S."/>
            <person name="Turner R."/>
            <person name="Yooseph S."/>
            <person name="Lu F."/>
            <person name="Nusskern D.R."/>
            <person name="Shue B.C."/>
            <person name="Zheng X.H."/>
            <person name="Zhong F."/>
            <person name="Delcher A.L."/>
            <person name="Huson D.H."/>
            <person name="Kravitz S.A."/>
            <person name="Mouchard L."/>
            <person name="Reinert K."/>
            <person name="Remington K.A."/>
            <person name="Clark A.G."/>
            <person name="Waterman M.S."/>
            <person name="Eichler E.E."/>
            <person name="Adams M.D."/>
            <person name="Hunkapiller M.W."/>
            <person name="Myers E.W."/>
            <person name="Venter J.C."/>
        </authorList>
    </citation>
    <scope>NUCLEOTIDE SEQUENCE [LARGE SCALE GENOMIC DNA]</scope>
</reference>
<reference key="4">
    <citation type="journal article" date="1998" name="Biochem. Biophys. Res. Commun.">
        <title>Molecular cloning, differential expression, and chromosomal localization of human frizzled-1, frizzled-2, and frizzled-7.</title>
        <authorList>
            <person name="Sagara N."/>
            <person name="Toda G."/>
            <person name="Hirai M."/>
            <person name="Terada M."/>
            <person name="Katoh M."/>
        </authorList>
    </citation>
    <scope>NUCLEOTIDE SEQUENCE [MRNA]</scope>
    <source>
        <tissue>Fetal lung</tissue>
    </source>
</reference>
<reference key="5">
    <citation type="journal article" date="2004" name="Genome Res.">
        <title>The status, quality, and expansion of the NIH full-length cDNA project: the Mammalian Gene Collection (MGC).</title>
        <authorList>
            <consortium name="The MGC Project Team"/>
        </authorList>
    </citation>
    <scope>NUCLEOTIDE SEQUENCE [LARGE SCALE MRNA]</scope>
    <source>
        <tissue>Lung</tissue>
    </source>
</reference>
<reference key="6">
    <citation type="journal article" date="2009" name="Mol. Cell. Biol.">
        <title>Myocilin is a modulator of Wnt signaling.</title>
        <authorList>
            <person name="Kwon H.S."/>
            <person name="Lee H.S."/>
            <person name="Ji Y."/>
            <person name="Rubin J.S."/>
            <person name="Tomarev S.I."/>
        </authorList>
    </citation>
    <scope>INTERACTION WITH MYOC</scope>
</reference>
<reference key="7">
    <citation type="journal article" date="2007" name="Breast Cancer Res.">
        <title>Somatic sequence alterations in twenty-one genes selected by expression profile analysis of breast carcinomas.</title>
        <authorList>
            <person name="Chanock S.J."/>
            <person name="Burdett L."/>
            <person name="Yeager M."/>
            <person name="Llaca V."/>
            <person name="Langeroed A."/>
            <person name="Presswalla S."/>
            <person name="Kaaresen R."/>
            <person name="Strausberg R.L."/>
            <person name="Gerhard D.S."/>
            <person name="Kristensen V."/>
            <person name="Perou C.M."/>
            <person name="Boerresen-Dale A.-L."/>
        </authorList>
    </citation>
    <scope>VARIANT SER-24</scope>
</reference>
<reference key="8">
    <citation type="journal article" date="2014" name="J. Cell Sci.">
        <title>Glypican-3 binds to Frizzled and plays a direct role in the stimulation of canonical Wnt signaling.</title>
        <authorList>
            <person name="Capurro M."/>
            <person name="Martin T."/>
            <person name="Shi W."/>
            <person name="Filmus J."/>
        </authorList>
    </citation>
    <scope>INTERACTION WITH GPC3</scope>
</reference>
<reference key="9">
    <citation type="journal article" date="2015" name="Elife">
        <title>Daple is a novel non-receptor GEF required for trimeric G protein activation in Wnt signaling.</title>
        <authorList>
            <person name="Aznar N."/>
            <person name="Midde K.K."/>
            <person name="Dunkel Y."/>
            <person name="Lopez-Sanchez I."/>
            <person name="Pavlova Y."/>
            <person name="Marivin A."/>
            <person name="Barbazan J."/>
            <person name="Murray F."/>
            <person name="Nitsche U."/>
            <person name="Janssen K.P."/>
            <person name="Willert K."/>
            <person name="Goel A."/>
            <person name="Abal M."/>
            <person name="Garcia-Marcos M."/>
            <person name="Ghosh P."/>
        </authorList>
    </citation>
    <scope>FUNCTION</scope>
    <scope>INTERACTION WITH CCDC88C</scope>
</reference>
<reference key="10">
    <citation type="journal article" date="2016" name="Nature">
        <title>Frizzled proteins are colonic epithelial receptors for C. difficile toxin B.</title>
        <authorList>
            <person name="Tao L."/>
            <person name="Zhang J."/>
            <person name="Meraner P."/>
            <person name="Tovaglieri A."/>
            <person name="Wu X."/>
            <person name="Gerhard R."/>
            <person name="Zhang X."/>
            <person name="Stallcup W.B."/>
            <person name="Miao J."/>
            <person name="He X."/>
            <person name="Hurdle J.G."/>
            <person name="Breault D.T."/>
            <person name="Brass A.L."/>
            <person name="Dong M."/>
        </authorList>
    </citation>
    <scope>FUNCTION (MICROBIAL INFECTION)</scope>
    <scope>INTERACTION WITH C.DIFFICILE TCDB (MICROBIAL INFECTION)</scope>
</reference>
<reference key="11">
    <citation type="journal article" date="2016" name="Nat. Commun.">
        <title>Frizzled 7 and PIP2 binding by syntenin PDZ2 domain supports Frizzled 7 trafficking and signalling.</title>
        <authorList>
            <person name="Egea-Jimenez A.L."/>
            <person name="Gallardo R."/>
            <person name="Garcia-Pino A."/>
            <person name="Ivarsson Y."/>
            <person name="Wawrzyniak A.M."/>
            <person name="Kashyap R."/>
            <person name="Loris R."/>
            <person name="Schymkowitz J."/>
            <person name="Rousseau F."/>
            <person name="Zimmermann P."/>
        </authorList>
    </citation>
    <scope>X-RAY CRYSTALLOGRAPHY (2.45 ANGSTROMS) OF 569-574</scope>
    <scope>SITE</scope>
    <scope>INTERACTION WITH SYNTENIN</scope>
    <scope>MUTAGENESIS OF LYS-569</scope>
    <scope>SUBCELLULAR LOCATION</scope>
</reference>
<accession>O75084</accession>
<accession>O94816</accession>
<accession>Q53S59</accession>
<accession>Q96B74</accession>
<keyword id="KW-0002">3D-structure</keyword>
<keyword id="KW-1003">Cell membrane</keyword>
<keyword id="KW-0217">Developmental protein</keyword>
<keyword id="KW-1015">Disulfide bond</keyword>
<keyword id="KW-0967">Endosome</keyword>
<keyword id="KW-0297">G-protein coupled receptor</keyword>
<keyword id="KW-0325">Glycoprotein</keyword>
<keyword id="KW-0472">Membrane</keyword>
<keyword id="KW-1267">Proteomics identification</keyword>
<keyword id="KW-0675">Receptor</keyword>
<keyword id="KW-1185">Reference proteome</keyword>
<keyword id="KW-0732">Signal</keyword>
<keyword id="KW-0807">Transducer</keyword>
<keyword id="KW-0812">Transmembrane</keyword>
<keyword id="KW-1133">Transmembrane helix</keyword>
<keyword id="KW-0832">Ubl conjugation</keyword>
<keyword id="KW-0879">Wnt signaling pathway</keyword>
<evidence type="ECO:0000250" key="1"/>
<evidence type="ECO:0000250" key="2">
    <source>
        <dbReference type="UniProtKB" id="Q61090"/>
    </source>
</evidence>
<evidence type="ECO:0000255" key="3"/>
<evidence type="ECO:0000255" key="4">
    <source>
        <dbReference type="PROSITE-ProRule" id="PRU00090"/>
    </source>
</evidence>
<evidence type="ECO:0000269" key="5">
    <source>
    </source>
</evidence>
<evidence type="ECO:0000269" key="6">
    <source>
    </source>
</evidence>
<evidence type="ECO:0000269" key="7">
    <source>
    </source>
</evidence>
<evidence type="ECO:0000269" key="8">
    <source>
    </source>
</evidence>
<evidence type="ECO:0000269" key="9">
    <source>
    </source>
</evidence>
<evidence type="ECO:0000269" key="10">
    <source>
    </source>
</evidence>
<evidence type="ECO:0000305" key="11"/>
<evidence type="ECO:0007829" key="12">
    <source>
        <dbReference type="PDB" id="4Z33"/>
    </source>
</evidence>
<evidence type="ECO:0007829" key="13">
    <source>
        <dbReference type="PDB" id="5T44"/>
    </source>
</evidence>
<evidence type="ECO:0007829" key="14">
    <source>
        <dbReference type="PDB" id="6NE2"/>
    </source>
</evidence>
<evidence type="ECO:0007829" key="15">
    <source>
        <dbReference type="PDB" id="6O3B"/>
    </source>
</evidence>
<evidence type="ECO:0007829" key="16">
    <source>
        <dbReference type="PDB" id="8QEO"/>
    </source>
</evidence>
<evidence type="ECO:0007829" key="17">
    <source>
        <dbReference type="PDB" id="9EPO"/>
    </source>
</evidence>
<evidence type="ECO:0007829" key="18">
    <source>
        <dbReference type="PDB" id="9EW2"/>
    </source>
</evidence>
<dbReference type="EMBL" id="AB010881">
    <property type="protein sequence ID" value="BAA32424.1"/>
    <property type="molecule type" value="mRNA"/>
</dbReference>
<dbReference type="EMBL" id="AB017365">
    <property type="protein sequence ID" value="BAA34668.1"/>
    <property type="molecule type" value="mRNA"/>
</dbReference>
<dbReference type="EMBL" id="AC069148">
    <property type="protein sequence ID" value="AAX93250.1"/>
    <property type="molecule type" value="Genomic_DNA"/>
</dbReference>
<dbReference type="EMBL" id="CH471063">
    <property type="protein sequence ID" value="EAW70298.1"/>
    <property type="molecule type" value="Genomic_DNA"/>
</dbReference>
<dbReference type="EMBL" id="BC015915">
    <property type="protein sequence ID" value="AAH15915.1"/>
    <property type="molecule type" value="mRNA"/>
</dbReference>
<dbReference type="CCDS" id="CCDS2351.1"/>
<dbReference type="PIR" id="JE0339">
    <property type="entry name" value="JE0339"/>
</dbReference>
<dbReference type="RefSeq" id="NP_003498.1">
    <property type="nucleotide sequence ID" value="NM_003507.2"/>
</dbReference>
<dbReference type="PDB" id="4Z33">
    <property type="method" value="X-ray"/>
    <property type="resolution" value="2.45 A"/>
    <property type="chains" value="C/D=569-574"/>
</dbReference>
<dbReference type="PDB" id="5T44">
    <property type="method" value="X-ray"/>
    <property type="resolution" value="1.99 A"/>
    <property type="chains" value="A/B=31-168"/>
</dbReference>
<dbReference type="PDB" id="5URV">
    <property type="method" value="X-ray"/>
    <property type="resolution" value="2.20 A"/>
    <property type="chains" value="A/B=30-168"/>
</dbReference>
<dbReference type="PDB" id="5WBS">
    <property type="method" value="X-ray"/>
    <property type="resolution" value="2.88 A"/>
    <property type="chains" value="A/B/C/D/E/F/G/H=30-174"/>
</dbReference>
<dbReference type="PDB" id="6NE2">
    <property type="method" value="X-ray"/>
    <property type="resolution" value="1.30 A"/>
    <property type="chains" value="A=46-163"/>
</dbReference>
<dbReference type="PDB" id="6NE4">
    <property type="method" value="X-ray"/>
    <property type="resolution" value="1.65 A"/>
    <property type="chains" value="A=46-163"/>
</dbReference>
<dbReference type="PDB" id="6O3A">
    <property type="method" value="X-ray"/>
    <property type="resolution" value="2.10 A"/>
    <property type="chains" value="E=42-179"/>
</dbReference>
<dbReference type="PDB" id="6O3B">
    <property type="method" value="X-ray"/>
    <property type="resolution" value="2.50 A"/>
    <property type="chains" value="C/H=42-179"/>
</dbReference>
<dbReference type="PDB" id="8QEO">
    <property type="method" value="EM"/>
    <property type="resolution" value="3.26 A"/>
    <property type="chains" value="B=33-574"/>
</dbReference>
<dbReference type="PDB" id="8YY8">
    <property type="method" value="EM"/>
    <property type="resolution" value="3.22 A"/>
    <property type="chains" value="R=38-574"/>
</dbReference>
<dbReference type="PDB" id="9EPO">
    <property type="method" value="EM"/>
    <property type="resolution" value="1.90 A"/>
    <property type="chains" value="A/D=33-574"/>
</dbReference>
<dbReference type="PDB" id="9EW2">
    <property type="method" value="EM"/>
    <property type="resolution" value="3.20 A"/>
    <property type="chains" value="R=38-574"/>
</dbReference>
<dbReference type="PDBsum" id="4Z33"/>
<dbReference type="PDBsum" id="5T44"/>
<dbReference type="PDBsum" id="5URV"/>
<dbReference type="PDBsum" id="5WBS"/>
<dbReference type="PDBsum" id="6NE2"/>
<dbReference type="PDBsum" id="6NE4"/>
<dbReference type="PDBsum" id="6O3A"/>
<dbReference type="PDBsum" id="6O3B"/>
<dbReference type="PDBsum" id="8QEO"/>
<dbReference type="PDBsum" id="8YY8"/>
<dbReference type="PDBsum" id="9EPO"/>
<dbReference type="PDBsum" id="9EW2"/>
<dbReference type="EMDB" id="EMD-18374"/>
<dbReference type="EMDB" id="EMD-19881"/>
<dbReference type="EMDB" id="EMD-31340"/>
<dbReference type="SMR" id="O75084"/>
<dbReference type="BioGRID" id="113920">
    <property type="interactions" value="85"/>
</dbReference>
<dbReference type="FunCoup" id="O75084">
    <property type="interactions" value="1819"/>
</dbReference>
<dbReference type="IntAct" id="O75084">
    <property type="interactions" value="67"/>
</dbReference>
<dbReference type="MINT" id="O75084"/>
<dbReference type="STRING" id="9606.ENSP00000286201"/>
<dbReference type="BindingDB" id="O75084"/>
<dbReference type="ChEMBL" id="CHEMBL3559688"/>
<dbReference type="GuidetoPHARMACOLOGY" id="235"/>
<dbReference type="GlyCosmos" id="O75084">
    <property type="glycosylation" value="3 sites, 1 glycan"/>
</dbReference>
<dbReference type="GlyGen" id="O75084">
    <property type="glycosylation" value="5 sites, 2 O-linked glycans (3 sites)"/>
</dbReference>
<dbReference type="iPTMnet" id="O75084"/>
<dbReference type="PhosphoSitePlus" id="O75084"/>
<dbReference type="BioMuta" id="FZD7"/>
<dbReference type="jPOST" id="O75084"/>
<dbReference type="MassIVE" id="O75084"/>
<dbReference type="PaxDb" id="9606-ENSP00000286201"/>
<dbReference type="PeptideAtlas" id="O75084"/>
<dbReference type="ProteomicsDB" id="49751"/>
<dbReference type="ABCD" id="O75084">
    <property type="antibodies" value="49 sequenced antibodies"/>
</dbReference>
<dbReference type="Antibodypedia" id="19943">
    <property type="antibodies" value="529 antibodies from 39 providers"/>
</dbReference>
<dbReference type="DNASU" id="8324"/>
<dbReference type="Ensembl" id="ENST00000286201.3">
    <property type="protein sequence ID" value="ENSP00000286201.1"/>
    <property type="gene ID" value="ENSG00000155760.3"/>
</dbReference>
<dbReference type="GeneID" id="8324"/>
<dbReference type="KEGG" id="hsa:8324"/>
<dbReference type="MANE-Select" id="ENST00000286201.3">
    <property type="protein sequence ID" value="ENSP00000286201.1"/>
    <property type="RefSeq nucleotide sequence ID" value="NM_003507.2"/>
    <property type="RefSeq protein sequence ID" value="NP_003498.1"/>
</dbReference>
<dbReference type="UCSC" id="uc002uyw.2">
    <property type="organism name" value="human"/>
</dbReference>
<dbReference type="AGR" id="HGNC:4045"/>
<dbReference type="CTD" id="8324"/>
<dbReference type="DisGeNET" id="8324"/>
<dbReference type="GeneCards" id="FZD7"/>
<dbReference type="HGNC" id="HGNC:4045">
    <property type="gene designation" value="FZD7"/>
</dbReference>
<dbReference type="HPA" id="ENSG00000155760">
    <property type="expression patterns" value="Low tissue specificity"/>
</dbReference>
<dbReference type="MIM" id="603410">
    <property type="type" value="gene"/>
</dbReference>
<dbReference type="neXtProt" id="NX_O75084"/>
<dbReference type="OpenTargets" id="ENSG00000155760"/>
<dbReference type="PharmGKB" id="PA28462"/>
<dbReference type="VEuPathDB" id="HostDB:ENSG00000155760"/>
<dbReference type="eggNOG" id="KOG3577">
    <property type="taxonomic scope" value="Eukaryota"/>
</dbReference>
<dbReference type="GeneTree" id="ENSGT00940000158239"/>
<dbReference type="HOGENOM" id="CLU_007873_2_1_1"/>
<dbReference type="InParanoid" id="O75084"/>
<dbReference type="OMA" id="YHRFSHS"/>
<dbReference type="OrthoDB" id="10053709at2759"/>
<dbReference type="PAN-GO" id="O75084">
    <property type="GO annotations" value="6 GO annotations based on evolutionary models"/>
</dbReference>
<dbReference type="PhylomeDB" id="O75084"/>
<dbReference type="TreeFam" id="TF317907"/>
<dbReference type="PathwayCommons" id="O75084"/>
<dbReference type="Reactome" id="R-HSA-373080">
    <property type="pathway name" value="Class B/2 (Secretin family receptors)"/>
</dbReference>
<dbReference type="Reactome" id="R-HSA-4086400">
    <property type="pathway name" value="PCP/CE pathway"/>
</dbReference>
<dbReference type="Reactome" id="R-HSA-4608870">
    <property type="pathway name" value="Asymmetric localization of PCP proteins"/>
</dbReference>
<dbReference type="Reactome" id="R-HSA-9673324">
    <property type="pathway name" value="WNT5:FZD7-mediated leishmania damping"/>
</dbReference>
<dbReference type="SignaLink" id="O75084"/>
<dbReference type="SIGNOR" id="O75084"/>
<dbReference type="BioGRID-ORCS" id="8324">
    <property type="hits" value="19 hits in 1152 CRISPR screens"/>
</dbReference>
<dbReference type="ChiTaRS" id="FZD7">
    <property type="organism name" value="human"/>
</dbReference>
<dbReference type="GeneWiki" id="FZD7"/>
<dbReference type="GenomeRNAi" id="8324"/>
<dbReference type="Pharos" id="O75084">
    <property type="development level" value="Tchem"/>
</dbReference>
<dbReference type="PRO" id="PR:O75084"/>
<dbReference type="Proteomes" id="UP000005640">
    <property type="component" value="Chromosome 2"/>
</dbReference>
<dbReference type="RNAct" id="O75084">
    <property type="molecule type" value="protein"/>
</dbReference>
<dbReference type="Bgee" id="ENSG00000155760">
    <property type="expression patterns" value="Expressed in hair follicle and 185 other cell types or tissues"/>
</dbReference>
<dbReference type="GO" id="GO:0043231">
    <property type="term" value="C:intracellular membrane-bounded organelle"/>
    <property type="evidence" value="ECO:0000314"/>
    <property type="project" value="HPA"/>
</dbReference>
<dbReference type="GO" id="GO:0016020">
    <property type="term" value="C:membrane"/>
    <property type="evidence" value="ECO:0000304"/>
    <property type="project" value="BHF-UCL"/>
</dbReference>
<dbReference type="GO" id="GO:0005886">
    <property type="term" value="C:plasma membrane"/>
    <property type="evidence" value="ECO:0000314"/>
    <property type="project" value="UniProtKB"/>
</dbReference>
<dbReference type="GO" id="GO:0055038">
    <property type="term" value="C:recycling endosome membrane"/>
    <property type="evidence" value="ECO:0000314"/>
    <property type="project" value="UniProtKB"/>
</dbReference>
<dbReference type="GO" id="GO:0005109">
    <property type="term" value="F:frizzled binding"/>
    <property type="evidence" value="ECO:0000353"/>
    <property type="project" value="UniProtKB"/>
</dbReference>
<dbReference type="GO" id="GO:0004930">
    <property type="term" value="F:G protein-coupled receptor activity"/>
    <property type="evidence" value="ECO:0007669"/>
    <property type="project" value="UniProtKB-KW"/>
</dbReference>
<dbReference type="GO" id="GO:0030165">
    <property type="term" value="F:PDZ domain binding"/>
    <property type="evidence" value="ECO:0000353"/>
    <property type="project" value="UniProtKB"/>
</dbReference>
<dbReference type="GO" id="GO:0005546">
    <property type="term" value="F:phosphatidylinositol-4,5-bisphosphate binding"/>
    <property type="evidence" value="ECO:0000314"/>
    <property type="project" value="UniProtKB"/>
</dbReference>
<dbReference type="GO" id="GO:0042813">
    <property type="term" value="F:Wnt receptor activity"/>
    <property type="evidence" value="ECO:0000314"/>
    <property type="project" value="WormBase"/>
</dbReference>
<dbReference type="GO" id="GO:0017147">
    <property type="term" value="F:Wnt-protein binding"/>
    <property type="evidence" value="ECO:0000353"/>
    <property type="project" value="BHF-UCL"/>
</dbReference>
<dbReference type="GO" id="GO:0060070">
    <property type="term" value="P:canonical Wnt signaling pathway"/>
    <property type="evidence" value="ECO:0000314"/>
    <property type="project" value="UniProtKB"/>
</dbReference>
<dbReference type="GO" id="GO:0071300">
    <property type="term" value="P:cellular response to retinoic acid"/>
    <property type="evidence" value="ECO:0000250"/>
    <property type="project" value="UniProtKB"/>
</dbReference>
<dbReference type="GO" id="GO:0060231">
    <property type="term" value="P:mesenchymal to epithelial transition"/>
    <property type="evidence" value="ECO:0000315"/>
    <property type="project" value="BHF-UCL"/>
</dbReference>
<dbReference type="GO" id="GO:2000726">
    <property type="term" value="P:negative regulation of cardiac muscle cell differentiation"/>
    <property type="evidence" value="ECO:0000316"/>
    <property type="project" value="BHF-UCL"/>
</dbReference>
<dbReference type="GO" id="GO:0010812">
    <property type="term" value="P:negative regulation of cell-substrate adhesion"/>
    <property type="evidence" value="ECO:0000315"/>
    <property type="project" value="BHF-UCL"/>
</dbReference>
<dbReference type="GO" id="GO:0042666">
    <property type="term" value="P:negative regulation of ectodermal cell fate specification"/>
    <property type="evidence" value="ECO:0000315"/>
    <property type="project" value="BHF-UCL"/>
</dbReference>
<dbReference type="GO" id="GO:0030182">
    <property type="term" value="P:neuron differentiation"/>
    <property type="evidence" value="ECO:0000250"/>
    <property type="project" value="UniProtKB"/>
</dbReference>
<dbReference type="GO" id="GO:0035567">
    <property type="term" value="P:non-canonical Wnt signaling pathway"/>
    <property type="evidence" value="ECO:0000315"/>
    <property type="project" value="BHF-UCL"/>
</dbReference>
<dbReference type="GO" id="GO:0045893">
    <property type="term" value="P:positive regulation of DNA-templated transcription"/>
    <property type="evidence" value="ECO:0000314"/>
    <property type="project" value="BHF-UCL"/>
</dbReference>
<dbReference type="GO" id="GO:0060054">
    <property type="term" value="P:positive regulation of epithelial cell proliferation involved in wound healing"/>
    <property type="evidence" value="ECO:0000315"/>
    <property type="project" value="BHF-UCL"/>
</dbReference>
<dbReference type="GO" id="GO:0046330">
    <property type="term" value="P:positive regulation of JNK cascade"/>
    <property type="evidence" value="ECO:0000305"/>
    <property type="project" value="BHF-UCL"/>
</dbReference>
<dbReference type="GO" id="GO:0043410">
    <property type="term" value="P:positive regulation of MAPK cascade"/>
    <property type="evidence" value="ECO:0000315"/>
    <property type="project" value="BHF-UCL"/>
</dbReference>
<dbReference type="GO" id="GO:0042327">
    <property type="term" value="P:positive regulation of phosphorylation"/>
    <property type="evidence" value="ECO:0000314"/>
    <property type="project" value="BHF-UCL"/>
</dbReference>
<dbReference type="GO" id="GO:0060828">
    <property type="term" value="P:regulation of canonical Wnt signaling pathway"/>
    <property type="evidence" value="ECO:0000315"/>
    <property type="project" value="BHF-UCL"/>
</dbReference>
<dbReference type="GO" id="GO:0006355">
    <property type="term" value="P:regulation of DNA-templated transcription"/>
    <property type="evidence" value="ECO:0000315"/>
    <property type="project" value="BHF-UCL"/>
</dbReference>
<dbReference type="GO" id="GO:0014834">
    <property type="term" value="P:skeletal muscle satellite cell maintenance involved in skeletal muscle regeneration"/>
    <property type="evidence" value="ECO:0007669"/>
    <property type="project" value="Ensembl"/>
</dbReference>
<dbReference type="GO" id="GO:0048103">
    <property type="term" value="P:somatic stem cell division"/>
    <property type="evidence" value="ECO:0007669"/>
    <property type="project" value="Ensembl"/>
</dbReference>
<dbReference type="GO" id="GO:0019827">
    <property type="term" value="P:stem cell population maintenance"/>
    <property type="evidence" value="ECO:0000315"/>
    <property type="project" value="BHF-UCL"/>
</dbReference>
<dbReference type="GO" id="GO:0034446">
    <property type="term" value="P:substrate adhesion-dependent cell spreading"/>
    <property type="evidence" value="ECO:0007669"/>
    <property type="project" value="Ensembl"/>
</dbReference>
<dbReference type="GO" id="GO:0033077">
    <property type="term" value="P:T cell differentiation in thymus"/>
    <property type="evidence" value="ECO:0007669"/>
    <property type="project" value="Ensembl"/>
</dbReference>
<dbReference type="GO" id="GO:0060071">
    <property type="term" value="P:Wnt signaling pathway, planar cell polarity pathway"/>
    <property type="evidence" value="ECO:0000303"/>
    <property type="project" value="ParkinsonsUK-UCL"/>
</dbReference>
<dbReference type="CDD" id="cd15246">
    <property type="entry name" value="7tmF_FZD7"/>
    <property type="match status" value="1"/>
</dbReference>
<dbReference type="CDD" id="cd07466">
    <property type="entry name" value="CRD_FZ7"/>
    <property type="match status" value="1"/>
</dbReference>
<dbReference type="FunFam" id="1.10.2000.10:FF:000003">
    <property type="entry name" value="Frizzled class receptor 2"/>
    <property type="match status" value="1"/>
</dbReference>
<dbReference type="FunFam" id="1.20.1070.10:FF:000029">
    <property type="entry name" value="Frizzled class receptor 2"/>
    <property type="match status" value="1"/>
</dbReference>
<dbReference type="Gene3D" id="1.10.2000.10">
    <property type="entry name" value="Frizzled cysteine-rich domain"/>
    <property type="match status" value="1"/>
</dbReference>
<dbReference type="Gene3D" id="1.20.1070.10">
    <property type="entry name" value="Rhodopsin 7-helix transmembrane proteins"/>
    <property type="match status" value="1"/>
</dbReference>
<dbReference type="InterPro" id="IPR042742">
    <property type="entry name" value="Frizzled-7_CRD"/>
</dbReference>
<dbReference type="InterPro" id="IPR015526">
    <property type="entry name" value="Frizzled/SFRP"/>
</dbReference>
<dbReference type="InterPro" id="IPR000539">
    <property type="entry name" value="Frizzled/Smoothened_7TM"/>
</dbReference>
<dbReference type="InterPro" id="IPR020067">
    <property type="entry name" value="Frizzled_dom"/>
</dbReference>
<dbReference type="InterPro" id="IPR036790">
    <property type="entry name" value="Frizzled_dom_sf"/>
</dbReference>
<dbReference type="InterPro" id="IPR017981">
    <property type="entry name" value="GPCR_2-like_7TM"/>
</dbReference>
<dbReference type="PANTHER" id="PTHR11309">
    <property type="entry name" value="FRIZZLED"/>
    <property type="match status" value="1"/>
</dbReference>
<dbReference type="PANTHER" id="PTHR11309:SF31">
    <property type="entry name" value="FRIZZLED-7"/>
    <property type="match status" value="1"/>
</dbReference>
<dbReference type="Pfam" id="PF01534">
    <property type="entry name" value="Frizzled"/>
    <property type="match status" value="1"/>
</dbReference>
<dbReference type="Pfam" id="PF01392">
    <property type="entry name" value="Fz"/>
    <property type="match status" value="1"/>
</dbReference>
<dbReference type="PRINTS" id="PR00489">
    <property type="entry name" value="FRIZZLED"/>
</dbReference>
<dbReference type="SMART" id="SM00063">
    <property type="entry name" value="FRI"/>
    <property type="match status" value="1"/>
</dbReference>
<dbReference type="SMART" id="SM01330">
    <property type="entry name" value="Frizzled"/>
    <property type="match status" value="1"/>
</dbReference>
<dbReference type="SUPFAM" id="SSF63501">
    <property type="entry name" value="Frizzled cysteine-rich domain"/>
    <property type="match status" value="1"/>
</dbReference>
<dbReference type="PROSITE" id="PS50038">
    <property type="entry name" value="FZ"/>
    <property type="match status" value="1"/>
</dbReference>
<dbReference type="PROSITE" id="PS50261">
    <property type="entry name" value="G_PROTEIN_RECEP_F2_4"/>
    <property type="match status" value="1"/>
</dbReference>
<protein>
    <recommendedName>
        <fullName>Frizzled-7</fullName>
        <shortName>Fz-7</shortName>
        <shortName>hFz7</shortName>
    </recommendedName>
    <alternativeName>
        <fullName>FzE3</fullName>
    </alternativeName>
</protein>